<proteinExistence type="inferred from homology"/>
<reference key="1">
    <citation type="submission" date="2004-08" db="EMBL/GenBank/DDBJ databases">
        <authorList>
            <consortium name="NIH - Xenopus Gene Collection (XGC) project"/>
        </authorList>
    </citation>
    <scope>NUCLEOTIDE SEQUENCE [LARGE SCALE MRNA]</scope>
    <source>
        <tissue>Eye</tissue>
    </source>
</reference>
<dbReference type="EMBL" id="BC080102">
    <property type="protein sequence ID" value="AAH80102.1"/>
    <property type="molecule type" value="mRNA"/>
</dbReference>
<dbReference type="RefSeq" id="NP_001087558.1">
    <property type="nucleotide sequence ID" value="NM_001094089.1"/>
</dbReference>
<dbReference type="SMR" id="Q68EU8"/>
<dbReference type="DNASU" id="447382"/>
<dbReference type="GeneID" id="447382"/>
<dbReference type="KEGG" id="xla:447382"/>
<dbReference type="AGR" id="Xenbase:XB-GENE-6253988"/>
<dbReference type="CTD" id="447382"/>
<dbReference type="Xenbase" id="XB-GENE-6253988">
    <property type="gene designation" value="emc6.S"/>
</dbReference>
<dbReference type="OMA" id="MKANFEW"/>
<dbReference type="OrthoDB" id="16510at2759"/>
<dbReference type="Proteomes" id="UP000186698">
    <property type="component" value="Chromosome 2S"/>
</dbReference>
<dbReference type="Bgee" id="447382">
    <property type="expression patterns" value="Expressed in gastrula and 19 other cell types or tissues"/>
</dbReference>
<dbReference type="GO" id="GO:0072546">
    <property type="term" value="C:EMC complex"/>
    <property type="evidence" value="ECO:0000250"/>
    <property type="project" value="UniProtKB"/>
</dbReference>
<dbReference type="GO" id="GO:0005789">
    <property type="term" value="C:endoplasmic reticulum membrane"/>
    <property type="evidence" value="ECO:0000250"/>
    <property type="project" value="UniProtKB"/>
</dbReference>
<dbReference type="GO" id="GO:0016020">
    <property type="term" value="C:membrane"/>
    <property type="evidence" value="ECO:0000250"/>
    <property type="project" value="UniProtKB"/>
</dbReference>
<dbReference type="GO" id="GO:0000045">
    <property type="term" value="P:autophagosome assembly"/>
    <property type="evidence" value="ECO:0000318"/>
    <property type="project" value="GO_Central"/>
</dbReference>
<dbReference type="GO" id="GO:0034975">
    <property type="term" value="P:protein folding in endoplasmic reticulum"/>
    <property type="evidence" value="ECO:0007669"/>
    <property type="project" value="TreeGrafter"/>
</dbReference>
<dbReference type="GO" id="GO:0045050">
    <property type="term" value="P:protein insertion into ER membrane by stop-transfer membrane-anchor sequence"/>
    <property type="evidence" value="ECO:0000250"/>
    <property type="project" value="UniProtKB"/>
</dbReference>
<dbReference type="GO" id="GO:0071816">
    <property type="term" value="P:tail-anchored membrane protein insertion into ER membrane"/>
    <property type="evidence" value="ECO:0000250"/>
    <property type="project" value="UniProtKB"/>
</dbReference>
<dbReference type="InterPro" id="IPR008504">
    <property type="entry name" value="Emc6"/>
</dbReference>
<dbReference type="InterPro" id="IPR029008">
    <property type="entry name" value="EMC6-like"/>
</dbReference>
<dbReference type="PANTHER" id="PTHR20994">
    <property type="entry name" value="ER MEMBRANE PROTEIN COMPLEX SUBUNIT 6"/>
    <property type="match status" value="1"/>
</dbReference>
<dbReference type="PANTHER" id="PTHR20994:SF0">
    <property type="entry name" value="ER MEMBRANE PROTEIN COMPLEX SUBUNIT 6"/>
    <property type="match status" value="1"/>
</dbReference>
<dbReference type="Pfam" id="PF07019">
    <property type="entry name" value="EMC6"/>
    <property type="match status" value="1"/>
</dbReference>
<accession>Q68EU8</accession>
<comment type="function">
    <text evidence="1">Part of the endoplasmic reticulum membrane protein complex (EMC) that enables the energy-independent insertion into endoplasmic reticulum membranes of newly synthesized membrane proteins. Preferentially accommodates proteins with transmembrane domains that are weakly hydrophobic or contain destabilizing features such as charged and aromatic residues. Involved in the cotranslational insertion of multi-pass membrane proteins in which stop-transfer membrane-anchor sequences become ER membrane spanning helices. It is also required for the post-translational insertion of tail-anchored/TA proteins in endoplasmic reticulum membranes. By mediating the proper cotranslational insertion of N-terminal transmembrane domains in an N-exo topology, with translocated N-terminus in the lumen of the ER, controls the topology of multi-pass membrane proteins like the G protein-coupled receptors. By regulating the insertion of various proteins in membranes, it is indirectly involved in many cellular processes.</text>
</comment>
<comment type="subunit">
    <text evidence="1">Component of the ER membrane protein complex (EMC).</text>
</comment>
<comment type="subcellular location">
    <subcellularLocation>
        <location evidence="1">Endoplasmic reticulum membrane</location>
        <topology evidence="1">Multi-pass membrane protein</topology>
    </subcellularLocation>
</comment>
<comment type="similarity">
    <text evidence="2">Belongs to the EMC6 family.</text>
</comment>
<feature type="chain" id="PRO_0000254159" description="ER membrane protein complex subunit 6">
    <location>
        <begin position="1"/>
        <end position="110"/>
    </location>
</feature>
<feature type="topological domain" description="Cytoplasmic" evidence="1">
    <location>
        <begin position="1"/>
        <end position="28"/>
    </location>
</feature>
<feature type="transmembrane region" description="Helical" evidence="1">
    <location>
        <begin position="29"/>
        <end position="44"/>
    </location>
</feature>
<feature type="topological domain" description="Lumenal" evidence="1">
    <location>
        <begin position="45"/>
        <end position="50"/>
    </location>
</feature>
<feature type="transmembrane region" description="Helical" evidence="1">
    <location>
        <begin position="51"/>
        <end position="71"/>
    </location>
</feature>
<feature type="topological domain" description="Cytoplasmic" evidence="1">
    <location>
        <begin position="72"/>
        <end position="89"/>
    </location>
</feature>
<feature type="transmembrane region" description="Helical" evidence="1">
    <location>
        <begin position="90"/>
        <end position="106"/>
    </location>
</feature>
<feature type="topological domain" description="Lumenal" evidence="1">
    <location>
        <begin position="107"/>
        <end position="110"/>
    </location>
</feature>
<keyword id="KW-0256">Endoplasmic reticulum</keyword>
<keyword id="KW-0472">Membrane</keyword>
<keyword id="KW-1185">Reference proteome</keyword>
<keyword id="KW-0812">Transmembrane</keyword>
<keyword id="KW-1133">Transmembrane helix</keyword>
<evidence type="ECO:0000250" key="1">
    <source>
        <dbReference type="UniProtKB" id="Q9BV81"/>
    </source>
</evidence>
<evidence type="ECO:0000305" key="2"/>
<gene>
    <name type="primary">emc6</name>
    <name type="synonym">tmem93</name>
</gene>
<sequence>MAGVALKREGPQFISEAAVRGNAAVLDYCRTSVSALSGATAGILGLTSLYGFIFYFLASFLLSLLLVLKSGRKWNKYFKSRKPLFTGGLVGGLFTYVLFWTFLYGMVHVY</sequence>
<organism>
    <name type="scientific">Xenopus laevis</name>
    <name type="common">African clawed frog</name>
    <dbReference type="NCBI Taxonomy" id="8355"/>
    <lineage>
        <taxon>Eukaryota</taxon>
        <taxon>Metazoa</taxon>
        <taxon>Chordata</taxon>
        <taxon>Craniata</taxon>
        <taxon>Vertebrata</taxon>
        <taxon>Euteleostomi</taxon>
        <taxon>Amphibia</taxon>
        <taxon>Batrachia</taxon>
        <taxon>Anura</taxon>
        <taxon>Pipoidea</taxon>
        <taxon>Pipidae</taxon>
        <taxon>Xenopodinae</taxon>
        <taxon>Xenopus</taxon>
        <taxon>Xenopus</taxon>
    </lineage>
</organism>
<protein>
    <recommendedName>
        <fullName>ER membrane protein complex subunit 6</fullName>
    </recommendedName>
    <alternativeName>
        <fullName>Transmembrane protein 93</fullName>
    </alternativeName>
</protein>
<name>EMC6_XENLA</name>